<accession>Q3JRV4</accession>
<keyword id="KW-0002">3D-structure</keyword>
<keyword id="KW-0378">Hydrolase</keyword>
<keyword id="KW-0479">Metal-binding</keyword>
<protein>
    <recommendedName>
        <fullName>Probable metallo-hydrolase BURPS1710b_2304</fullName>
        <ecNumber>3.-.-.-</ecNumber>
    </recommendedName>
</protein>
<gene>
    <name type="ordered locus">BURPS1710b_2304</name>
</gene>
<dbReference type="EC" id="3.-.-.-"/>
<dbReference type="EMBL" id="CP000124">
    <property type="protein sequence ID" value="ABA48988.1"/>
    <property type="molecule type" value="Genomic_DNA"/>
</dbReference>
<dbReference type="RefSeq" id="WP_004521366.1">
    <property type="nucleotide sequence ID" value="NC_007434.1"/>
</dbReference>
<dbReference type="PDB" id="4EFZ">
    <property type="method" value="X-ray"/>
    <property type="resolution" value="1.60 A"/>
    <property type="chains" value="A/B=1-294"/>
</dbReference>
<dbReference type="PDBsum" id="4EFZ"/>
<dbReference type="SMR" id="Q3JRV4"/>
<dbReference type="EnsemblBacteria" id="ABA48988">
    <property type="protein sequence ID" value="ABA48988"/>
    <property type="gene ID" value="BURPS1710b_2304"/>
</dbReference>
<dbReference type="KEGG" id="bpm:BURPS1710b_2304"/>
<dbReference type="HOGENOM" id="CLU_030571_6_1_4"/>
<dbReference type="EvolutionaryTrace" id="Q3JRV4"/>
<dbReference type="Proteomes" id="UP000002700">
    <property type="component" value="Chromosome I"/>
</dbReference>
<dbReference type="GO" id="GO:0016787">
    <property type="term" value="F:hydrolase activity"/>
    <property type="evidence" value="ECO:0007669"/>
    <property type="project" value="UniProtKB-KW"/>
</dbReference>
<dbReference type="GO" id="GO:0046872">
    <property type="term" value="F:metal ion binding"/>
    <property type="evidence" value="ECO:0007669"/>
    <property type="project" value="UniProtKB-KW"/>
</dbReference>
<dbReference type="GO" id="GO:0050313">
    <property type="term" value="F:sulfur dioxygenase activity"/>
    <property type="evidence" value="ECO:0007669"/>
    <property type="project" value="InterPro"/>
</dbReference>
<dbReference type="GO" id="GO:0006749">
    <property type="term" value="P:glutathione metabolic process"/>
    <property type="evidence" value="ECO:0007669"/>
    <property type="project" value="InterPro"/>
</dbReference>
<dbReference type="GO" id="GO:0070813">
    <property type="term" value="P:hydrogen sulfide metabolic process"/>
    <property type="evidence" value="ECO:0007669"/>
    <property type="project" value="TreeGrafter"/>
</dbReference>
<dbReference type="CDD" id="cd07724">
    <property type="entry name" value="POD-like_MBL-fold"/>
    <property type="match status" value="1"/>
</dbReference>
<dbReference type="Gene3D" id="3.60.15.10">
    <property type="entry name" value="Ribonuclease Z/Hydroxyacylglutathione hydrolase-like"/>
    <property type="match status" value="1"/>
</dbReference>
<dbReference type="InterPro" id="IPR001279">
    <property type="entry name" value="Metallo-B-lactamas"/>
</dbReference>
<dbReference type="InterPro" id="IPR051682">
    <property type="entry name" value="Mito_Persulfide_Diox"/>
</dbReference>
<dbReference type="InterPro" id="IPR044528">
    <property type="entry name" value="POD-like_MBL-fold"/>
</dbReference>
<dbReference type="InterPro" id="IPR036866">
    <property type="entry name" value="RibonucZ/Hydroxyglut_hydro"/>
</dbReference>
<dbReference type="PANTHER" id="PTHR43084">
    <property type="entry name" value="PERSULFIDE DIOXYGENASE ETHE1"/>
    <property type="match status" value="1"/>
</dbReference>
<dbReference type="PANTHER" id="PTHR43084:SF1">
    <property type="entry name" value="PERSULFIDE DIOXYGENASE ETHE1, MITOCHONDRIAL"/>
    <property type="match status" value="1"/>
</dbReference>
<dbReference type="Pfam" id="PF00753">
    <property type="entry name" value="Lactamase_B"/>
    <property type="match status" value="1"/>
</dbReference>
<dbReference type="SMART" id="SM00849">
    <property type="entry name" value="Lactamase_B"/>
    <property type="match status" value="1"/>
</dbReference>
<dbReference type="SUPFAM" id="SSF56281">
    <property type="entry name" value="Metallo-hydrolase/oxidoreductase"/>
    <property type="match status" value="1"/>
</dbReference>
<sequence length="294" mass="32091">MTVEGFFDPATCTISYLLFDSGSGECALIDSVLDYDPKSGRTRTASADQLIARVAALGARVRWLLETHVHADHLSAAPYLKTRVGGEIAIGRHVTRVQDVFGKLFNAGPAFAHDGSQFDRLLDDGDTLALGALSIRAMHTPGHTPACMTYVVTEAHAAHDARDAAAFVGDTLFMPDYGTARCDFPGGDARSLYRSIRKVLSLPPATRLYMCHDYQPNGRAIQYASTVADELRENVHIREGVTEDDFVAMRTARDATLDMPVLMLPSVQVNMRAGRLPEPEDNGVRYLKIPLDAI</sequence>
<evidence type="ECO:0000250" key="1"/>
<evidence type="ECO:0000305" key="2"/>
<evidence type="ECO:0007829" key="3">
    <source>
        <dbReference type="PDB" id="4EFZ"/>
    </source>
</evidence>
<proteinExistence type="evidence at protein level"/>
<organism>
    <name type="scientific">Burkholderia pseudomallei (strain 1710b)</name>
    <dbReference type="NCBI Taxonomy" id="320372"/>
    <lineage>
        <taxon>Bacteria</taxon>
        <taxon>Pseudomonadati</taxon>
        <taxon>Pseudomonadota</taxon>
        <taxon>Betaproteobacteria</taxon>
        <taxon>Burkholderiales</taxon>
        <taxon>Burkholderiaceae</taxon>
        <taxon>Burkholderia</taxon>
        <taxon>pseudomallei group</taxon>
    </lineage>
</organism>
<feature type="chain" id="PRO_0000425277" description="Probable metallo-hydrolase BURPS1710b_2304">
    <location>
        <begin position="1"/>
        <end position="294"/>
    </location>
</feature>
<feature type="binding site">
    <location>
        <position position="68"/>
    </location>
    <ligand>
        <name>a divalent metal cation</name>
        <dbReference type="ChEBI" id="CHEBI:60240"/>
        <label>1</label>
    </ligand>
</feature>
<feature type="binding site" evidence="1">
    <location>
        <position position="70"/>
    </location>
    <ligand>
        <name>a divalent metal cation</name>
        <dbReference type="ChEBI" id="CHEBI:60240"/>
        <label>1</label>
    </ligand>
</feature>
<feature type="binding site" evidence="1">
    <location>
        <position position="72"/>
    </location>
    <ligand>
        <name>a divalent metal cation</name>
        <dbReference type="ChEBI" id="CHEBI:60240"/>
        <label>2</label>
    </ligand>
</feature>
<feature type="binding site" evidence="1">
    <location>
        <position position="73"/>
    </location>
    <ligand>
        <name>a divalent metal cation</name>
        <dbReference type="ChEBI" id="CHEBI:60240"/>
        <label>2</label>
    </ligand>
</feature>
<feature type="binding site">
    <location>
        <position position="143"/>
    </location>
    <ligand>
        <name>a divalent metal cation</name>
        <dbReference type="ChEBI" id="CHEBI:60240"/>
        <label>1</label>
    </ligand>
</feature>
<feature type="binding site">
    <location>
        <position position="170"/>
    </location>
    <ligand>
        <name>a divalent metal cation</name>
        <dbReference type="ChEBI" id="CHEBI:60240"/>
        <label>1</label>
    </ligand>
</feature>
<feature type="binding site" evidence="1">
    <location>
        <position position="170"/>
    </location>
    <ligand>
        <name>a divalent metal cation</name>
        <dbReference type="ChEBI" id="CHEBI:60240"/>
        <label>2</label>
    </ligand>
</feature>
<feature type="binding site" evidence="1">
    <location>
        <position position="212"/>
    </location>
    <ligand>
        <name>a divalent metal cation</name>
        <dbReference type="ChEBI" id="CHEBI:60240"/>
        <label>2</label>
    </ligand>
</feature>
<feature type="strand" evidence="3">
    <location>
        <begin position="2"/>
        <end position="7"/>
    </location>
</feature>
<feature type="turn" evidence="3">
    <location>
        <begin position="9"/>
        <end position="11"/>
    </location>
</feature>
<feature type="strand" evidence="3">
    <location>
        <begin position="13"/>
        <end position="19"/>
    </location>
</feature>
<feature type="turn" evidence="3">
    <location>
        <begin position="21"/>
        <end position="23"/>
    </location>
</feature>
<feature type="strand" evidence="3">
    <location>
        <begin position="25"/>
        <end position="30"/>
    </location>
</feature>
<feature type="strand" evidence="3">
    <location>
        <begin position="33"/>
        <end position="35"/>
    </location>
</feature>
<feature type="turn" evidence="3">
    <location>
        <begin position="37"/>
        <end position="39"/>
    </location>
</feature>
<feature type="helix" evidence="3">
    <location>
        <begin position="45"/>
        <end position="57"/>
    </location>
</feature>
<feature type="strand" evidence="3">
    <location>
        <begin position="60"/>
        <end position="65"/>
    </location>
</feature>
<feature type="strand" evidence="3">
    <location>
        <begin position="71"/>
        <end position="74"/>
    </location>
</feature>
<feature type="helix" evidence="3">
    <location>
        <begin position="77"/>
        <end position="84"/>
    </location>
</feature>
<feature type="strand" evidence="3">
    <location>
        <begin position="87"/>
        <end position="91"/>
    </location>
</feature>
<feature type="helix" evidence="3">
    <location>
        <begin position="94"/>
        <end position="104"/>
    </location>
</feature>
<feature type="strand" evidence="3">
    <location>
        <begin position="113"/>
        <end position="115"/>
    </location>
</feature>
<feature type="strand" evidence="3">
    <location>
        <begin position="118"/>
        <end position="122"/>
    </location>
</feature>
<feature type="strand" evidence="3">
    <location>
        <begin position="127"/>
        <end position="130"/>
    </location>
</feature>
<feature type="strand" evidence="3">
    <location>
        <begin position="133"/>
        <end position="139"/>
    </location>
</feature>
<feature type="strand" evidence="3">
    <location>
        <begin position="142"/>
        <end position="144"/>
    </location>
</feature>
<feature type="strand" evidence="3">
    <location>
        <begin position="148"/>
        <end position="154"/>
    </location>
</feature>
<feature type="helix" evidence="3">
    <location>
        <begin position="159"/>
        <end position="161"/>
    </location>
</feature>
<feature type="strand" evidence="3">
    <location>
        <begin position="165"/>
        <end position="167"/>
    </location>
</feature>
<feature type="strand" evidence="3">
    <location>
        <begin position="170"/>
        <end position="172"/>
    </location>
</feature>
<feature type="turn" evidence="3">
    <location>
        <begin position="175"/>
        <end position="177"/>
    </location>
</feature>
<feature type="helix" evidence="3">
    <location>
        <begin position="189"/>
        <end position="199"/>
    </location>
</feature>
<feature type="strand" evidence="3">
    <location>
        <begin position="207"/>
        <end position="209"/>
    </location>
</feature>
<feature type="strand" evidence="3">
    <location>
        <begin position="224"/>
        <end position="226"/>
    </location>
</feature>
<feature type="helix" evidence="3">
    <location>
        <begin position="227"/>
        <end position="233"/>
    </location>
</feature>
<feature type="turn" evidence="3">
    <location>
        <begin position="235"/>
        <end position="237"/>
    </location>
</feature>
<feature type="helix" evidence="3">
    <location>
        <begin position="243"/>
        <end position="254"/>
    </location>
</feature>
<feature type="helix" evidence="3">
    <location>
        <begin position="263"/>
        <end position="270"/>
    </location>
</feature>
<feature type="turn" evidence="3">
    <location>
        <begin position="271"/>
        <end position="274"/>
    </location>
</feature>
<name>Y2304_BURP1</name>
<reference key="1">
    <citation type="journal article" date="2010" name="Genome Biol. Evol.">
        <title>Continuing evolution of Burkholderia mallei through genome reduction and large-scale rearrangements.</title>
        <authorList>
            <person name="Losada L."/>
            <person name="Ronning C.M."/>
            <person name="DeShazer D."/>
            <person name="Woods D."/>
            <person name="Fedorova N."/>
            <person name="Kim H.S."/>
            <person name="Shabalina S.A."/>
            <person name="Pearson T.R."/>
            <person name="Brinkac L."/>
            <person name="Tan P."/>
            <person name="Nandi T."/>
            <person name="Crabtree J."/>
            <person name="Badger J."/>
            <person name="Beckstrom-Sternberg S."/>
            <person name="Saqib M."/>
            <person name="Schutzer S.E."/>
            <person name="Keim P."/>
            <person name="Nierman W.C."/>
        </authorList>
    </citation>
    <scope>NUCLEOTIDE SEQUENCE [LARGE SCALE GENOMIC DNA]</scope>
    <source>
        <strain>1710b</strain>
    </source>
</reference>
<reference key="2">
    <citation type="submission" date="2012-05" db="UniProtKB">
        <authorList>
            <person name="Phan I."/>
        </authorList>
    </citation>
    <scope>LACK OF BETA-LACTAMASE ACTIVITY</scope>
    <scope>METAL-BINDING</scope>
    <source>
        <strain>1710b</strain>
    </source>
</reference>
<reference key="3">
    <citation type="submission" date="2012-05" db="PDB data bank">
        <title>Crystal structure of a hypothetical metallo-beta-lactamase from Burkholderia pseudomallei.</title>
        <authorList>
            <consortium name="Seattle structural genomics center for infectious disease (SSGCID)"/>
        </authorList>
    </citation>
    <scope>X-RAY CRYSTALLOGRAPHY (1.60 ANGSTROMS) IN COMPLEX WITH CALCIUM</scope>
    <source>
        <strain>1710b</strain>
    </source>
</reference>
<comment type="function">
    <text>Probable hydrolase. Does not have beta-lactamase activity.</text>
</comment>
<comment type="cofactor">
    <cofactor evidence="1">
        <name>a divalent metal cation</name>
        <dbReference type="ChEBI" id="CHEBI:60240"/>
    </cofactor>
    <text evidence="1">Binds 2 divalent metal cations per subunit.</text>
</comment>
<comment type="miscellaneous">
    <text>The heavy atoms seen in the catalytic site in the crystallographic structure were modeled as calcium ions due to the electron density. However, it is possible that these are larger metals such as zinc or iron that have low occupancy in the catalytic site. Indeed, zinc and iron ions are both observed in metallo-beta-lactamase superfamily members.</text>
</comment>
<comment type="similarity">
    <text evidence="2">Belongs to the metallo-beta-lactamase superfamily.</text>
</comment>